<accession>B5RQU6</accession>
<gene>
    <name evidence="1" type="primary">frr</name>
    <name type="ordered locus">BRE_123</name>
</gene>
<feature type="chain" id="PRO_1000090713" description="Ribosome-recycling factor">
    <location>
        <begin position="1"/>
        <end position="184"/>
    </location>
</feature>
<sequence length="184" mass="21316">MEEYKALLDEKMGRVVLSLESEYKSLRTGRVNSALFDKVFVDYYGEKTPLTRVANISVPEARLIVIQPWDRSLLSKIEQAILNSDLSMNPSSDGSVLRIKVPVLTIERRKEIVKQAKKIAEDHKIATRNIRHELNNKAKKQEKDSQITEDDLRRILDDIQRDTNFYIKKIDGIFDLKAKEIMEV</sequence>
<proteinExistence type="inferred from homology"/>
<organism>
    <name type="scientific">Borrelia recurrentis (strain A1)</name>
    <dbReference type="NCBI Taxonomy" id="412418"/>
    <lineage>
        <taxon>Bacteria</taxon>
        <taxon>Pseudomonadati</taxon>
        <taxon>Spirochaetota</taxon>
        <taxon>Spirochaetia</taxon>
        <taxon>Spirochaetales</taxon>
        <taxon>Borreliaceae</taxon>
        <taxon>Borrelia</taxon>
    </lineage>
</organism>
<dbReference type="EMBL" id="CP000993">
    <property type="protein sequence ID" value="ACH94380.1"/>
    <property type="molecule type" value="Genomic_DNA"/>
</dbReference>
<dbReference type="RefSeq" id="WP_012537892.1">
    <property type="nucleotide sequence ID" value="NZ_CP169983.1"/>
</dbReference>
<dbReference type="SMR" id="B5RQU6"/>
<dbReference type="KEGG" id="bre:BRE_123"/>
<dbReference type="HOGENOM" id="CLU_073981_2_0_12"/>
<dbReference type="Proteomes" id="UP000000612">
    <property type="component" value="Chromosome"/>
</dbReference>
<dbReference type="GO" id="GO:0005737">
    <property type="term" value="C:cytoplasm"/>
    <property type="evidence" value="ECO:0007669"/>
    <property type="project" value="UniProtKB-SubCell"/>
</dbReference>
<dbReference type="GO" id="GO:0043023">
    <property type="term" value="F:ribosomal large subunit binding"/>
    <property type="evidence" value="ECO:0007669"/>
    <property type="project" value="TreeGrafter"/>
</dbReference>
<dbReference type="GO" id="GO:0006415">
    <property type="term" value="P:translational termination"/>
    <property type="evidence" value="ECO:0007669"/>
    <property type="project" value="UniProtKB-UniRule"/>
</dbReference>
<dbReference type="CDD" id="cd00520">
    <property type="entry name" value="RRF"/>
    <property type="match status" value="1"/>
</dbReference>
<dbReference type="FunFam" id="1.10.132.20:FF:000001">
    <property type="entry name" value="Ribosome-recycling factor"/>
    <property type="match status" value="1"/>
</dbReference>
<dbReference type="FunFam" id="3.30.1360.40:FF:000001">
    <property type="entry name" value="Ribosome-recycling factor"/>
    <property type="match status" value="1"/>
</dbReference>
<dbReference type="Gene3D" id="3.30.1360.40">
    <property type="match status" value="1"/>
</dbReference>
<dbReference type="Gene3D" id="1.10.132.20">
    <property type="entry name" value="Ribosome-recycling factor"/>
    <property type="match status" value="1"/>
</dbReference>
<dbReference type="HAMAP" id="MF_00040">
    <property type="entry name" value="RRF"/>
    <property type="match status" value="1"/>
</dbReference>
<dbReference type="InterPro" id="IPR002661">
    <property type="entry name" value="Ribosome_recyc_fac"/>
</dbReference>
<dbReference type="InterPro" id="IPR023584">
    <property type="entry name" value="Ribosome_recyc_fac_dom"/>
</dbReference>
<dbReference type="InterPro" id="IPR036191">
    <property type="entry name" value="RRF_sf"/>
</dbReference>
<dbReference type="NCBIfam" id="TIGR00496">
    <property type="entry name" value="frr"/>
    <property type="match status" value="1"/>
</dbReference>
<dbReference type="PANTHER" id="PTHR20982:SF3">
    <property type="entry name" value="MITOCHONDRIAL RIBOSOME RECYCLING FACTOR PSEUDO 1"/>
    <property type="match status" value="1"/>
</dbReference>
<dbReference type="PANTHER" id="PTHR20982">
    <property type="entry name" value="RIBOSOME RECYCLING FACTOR"/>
    <property type="match status" value="1"/>
</dbReference>
<dbReference type="Pfam" id="PF01765">
    <property type="entry name" value="RRF"/>
    <property type="match status" value="1"/>
</dbReference>
<dbReference type="SUPFAM" id="SSF55194">
    <property type="entry name" value="Ribosome recycling factor, RRF"/>
    <property type="match status" value="1"/>
</dbReference>
<protein>
    <recommendedName>
        <fullName evidence="1">Ribosome-recycling factor</fullName>
        <shortName evidence="1">RRF</shortName>
    </recommendedName>
    <alternativeName>
        <fullName evidence="1">Ribosome-releasing factor</fullName>
    </alternativeName>
</protein>
<reference key="1">
    <citation type="journal article" date="2008" name="PLoS Genet.">
        <title>The genome of Borrelia recurrentis, the agent of deadly louse-borne relapsing fever, is a degraded subset of tick-borne Borrelia duttonii.</title>
        <authorList>
            <person name="Lescot M."/>
            <person name="Audic S."/>
            <person name="Robert C."/>
            <person name="Nguyen T.T."/>
            <person name="Blanc G."/>
            <person name="Cutler S.J."/>
            <person name="Wincker P."/>
            <person name="Couloux A."/>
            <person name="Claverie J.-M."/>
            <person name="Raoult D."/>
            <person name="Drancourt M."/>
        </authorList>
    </citation>
    <scope>NUCLEOTIDE SEQUENCE [LARGE SCALE GENOMIC DNA]</scope>
    <source>
        <strain>A1</strain>
    </source>
</reference>
<evidence type="ECO:0000255" key="1">
    <source>
        <dbReference type="HAMAP-Rule" id="MF_00040"/>
    </source>
</evidence>
<name>RRF_BORRA</name>
<keyword id="KW-0963">Cytoplasm</keyword>
<keyword id="KW-0648">Protein biosynthesis</keyword>
<comment type="function">
    <text evidence="1">Responsible for the release of ribosomes from messenger RNA at the termination of protein biosynthesis. May increase the efficiency of translation by recycling ribosomes from one round of translation to another.</text>
</comment>
<comment type="subcellular location">
    <subcellularLocation>
        <location evidence="1">Cytoplasm</location>
    </subcellularLocation>
</comment>
<comment type="similarity">
    <text evidence="1">Belongs to the RRF family.</text>
</comment>